<accession>B2B0S1</accession>
<accession>A0A090CGY6</accession>
<sequence length="204" mass="23690">MPSLLLIIFVTELVVQLVNTLGATTINDLLWRIYLTLPTPLSLEFAQQRRKQKEYLAVRHELKATSSQDEFAKWAKLRRQHDKLLEDLEKKKASLEAARTKFDRTLTTTRTVSTRSVQWFLPFWYSKEPMFWLPYGWFPYYVEWFASFPRAPMGSVSIVVWQWACTAVIALMIEAATAALVYVAAKQSQKIRQPVPAQSEKKDS</sequence>
<feature type="chain" id="PRO_0000388612" description="Protein GET1">
    <location>
        <begin position="1"/>
        <end position="204"/>
    </location>
</feature>
<feature type="topological domain" description="Lumenal" evidence="1">
    <location>
        <begin position="1"/>
        <end position="4"/>
    </location>
</feature>
<feature type="transmembrane region" description="Helical" evidence="1">
    <location>
        <begin position="5"/>
        <end position="24"/>
    </location>
</feature>
<feature type="topological domain" description="Cytoplasmic" evidence="1">
    <location>
        <begin position="25"/>
        <end position="110"/>
    </location>
</feature>
<feature type="transmembrane region" description="Helical" evidence="1">
    <location>
        <begin position="111"/>
        <end position="131"/>
    </location>
</feature>
<feature type="topological domain" description="Lumenal" evidence="1">
    <location>
        <begin position="132"/>
        <end position="155"/>
    </location>
</feature>
<feature type="transmembrane region" description="Helical" evidence="1">
    <location>
        <begin position="156"/>
        <end position="172"/>
    </location>
</feature>
<feature type="topological domain" description="Cytoplasmic" evidence="1">
    <location>
        <begin position="173"/>
        <end position="204"/>
    </location>
</feature>
<feature type="coiled-coil region" evidence="1">
    <location>
        <begin position="72"/>
        <end position="107"/>
    </location>
</feature>
<gene>
    <name evidence="1" type="primary">GET1</name>
    <name type="ordered locus">Pa_3_7110</name>
    <name type="ORF">PODANS_3_7110</name>
</gene>
<comment type="function">
    <text evidence="1">Required for the post-translational delivery of tail-anchored (TA) proteins to the endoplasmic reticulum. Acts as a membrane receptor for soluble GET3, which recognizes and selectively binds the transmembrane domain of TA proteins in the cytosol.</text>
</comment>
<comment type="subunit">
    <text evidence="1">Interacts with GET3.</text>
</comment>
<comment type="subcellular location">
    <subcellularLocation>
        <location evidence="1">Endoplasmic reticulum membrane</location>
        <topology evidence="1">Multi-pass membrane protein</topology>
    </subcellularLocation>
</comment>
<comment type="similarity">
    <text evidence="1">Belongs to the WRB/GET1 family.</text>
</comment>
<name>GET1_PODAN</name>
<proteinExistence type="inferred from homology"/>
<reference key="1">
    <citation type="journal article" date="2008" name="Genome Biol.">
        <title>The genome sequence of the model ascomycete fungus Podospora anserina.</title>
        <authorList>
            <person name="Espagne E."/>
            <person name="Lespinet O."/>
            <person name="Malagnac F."/>
            <person name="Da Silva C."/>
            <person name="Jaillon O."/>
            <person name="Porcel B.M."/>
            <person name="Couloux A."/>
            <person name="Aury J.-M."/>
            <person name="Segurens B."/>
            <person name="Poulain J."/>
            <person name="Anthouard V."/>
            <person name="Grossetete S."/>
            <person name="Khalili H."/>
            <person name="Coppin E."/>
            <person name="Dequard-Chablat M."/>
            <person name="Picard M."/>
            <person name="Contamine V."/>
            <person name="Arnaise S."/>
            <person name="Bourdais A."/>
            <person name="Berteaux-Lecellier V."/>
            <person name="Gautheret D."/>
            <person name="de Vries R.P."/>
            <person name="Battaglia E."/>
            <person name="Coutinho P.M."/>
            <person name="Danchin E.G.J."/>
            <person name="Henrissat B."/>
            <person name="El Khoury R."/>
            <person name="Sainsard-Chanet A."/>
            <person name="Boivin A."/>
            <person name="Pinan-Lucarre B."/>
            <person name="Sellem C.H."/>
            <person name="Debuchy R."/>
            <person name="Wincker P."/>
            <person name="Weissenbach J."/>
            <person name="Silar P."/>
        </authorList>
    </citation>
    <scope>NUCLEOTIDE SEQUENCE [LARGE SCALE GENOMIC DNA]</scope>
    <source>
        <strain>S / ATCC MYA-4624 / DSM 980 / FGSC 10383</strain>
    </source>
</reference>
<reference key="2">
    <citation type="journal article" date="2014" name="Genetics">
        <title>Maintaining two mating types: Structure of the mating type locus and its role in heterokaryosis in Podospora anserina.</title>
        <authorList>
            <person name="Grognet P."/>
            <person name="Bidard F."/>
            <person name="Kuchly C."/>
            <person name="Tong L.C.H."/>
            <person name="Coppin E."/>
            <person name="Benkhali J.A."/>
            <person name="Couloux A."/>
            <person name="Wincker P."/>
            <person name="Debuchy R."/>
            <person name="Silar P."/>
        </authorList>
    </citation>
    <scope>GENOME REANNOTATION</scope>
    <source>
        <strain>S / ATCC MYA-4624 / DSM 980 / FGSC 10383</strain>
    </source>
</reference>
<dbReference type="EMBL" id="CU638743">
    <property type="protein sequence ID" value="CAP70646.1"/>
    <property type="molecule type" value="Genomic_DNA"/>
</dbReference>
<dbReference type="EMBL" id="FO904938">
    <property type="protein sequence ID" value="CDP27235.1"/>
    <property type="molecule type" value="Genomic_DNA"/>
</dbReference>
<dbReference type="RefSeq" id="XP_001909513.1">
    <property type="nucleotide sequence ID" value="XM_001909478.1"/>
</dbReference>
<dbReference type="SMR" id="B2B0S1"/>
<dbReference type="FunCoup" id="B2B0S1">
    <property type="interactions" value="26"/>
</dbReference>
<dbReference type="STRING" id="515849.B2B0S1"/>
<dbReference type="GeneID" id="6193478"/>
<dbReference type="KEGG" id="pan:PODANSg6549"/>
<dbReference type="VEuPathDB" id="FungiDB:PODANS_3_7110"/>
<dbReference type="eggNOG" id="KOG4253">
    <property type="taxonomic scope" value="Eukaryota"/>
</dbReference>
<dbReference type="HOGENOM" id="CLU_089418_1_0_1"/>
<dbReference type="InParanoid" id="B2B0S1"/>
<dbReference type="OrthoDB" id="69461at2759"/>
<dbReference type="Proteomes" id="UP000001197">
    <property type="component" value="Chromosome 3"/>
</dbReference>
<dbReference type="GO" id="GO:0005789">
    <property type="term" value="C:endoplasmic reticulum membrane"/>
    <property type="evidence" value="ECO:0007669"/>
    <property type="project" value="UniProtKB-SubCell"/>
</dbReference>
<dbReference type="GO" id="GO:0043529">
    <property type="term" value="C:GET complex"/>
    <property type="evidence" value="ECO:0007669"/>
    <property type="project" value="InterPro"/>
</dbReference>
<dbReference type="GO" id="GO:0043495">
    <property type="term" value="F:protein-membrane adaptor activity"/>
    <property type="evidence" value="ECO:0007669"/>
    <property type="project" value="TreeGrafter"/>
</dbReference>
<dbReference type="GO" id="GO:0071816">
    <property type="term" value="P:tail-anchored membrane protein insertion into ER membrane"/>
    <property type="evidence" value="ECO:0007669"/>
    <property type="project" value="InterPro"/>
</dbReference>
<dbReference type="FunFam" id="1.10.287.660:FF:000006">
    <property type="entry name" value="Protein GET1"/>
    <property type="match status" value="1"/>
</dbReference>
<dbReference type="Gene3D" id="1.10.287.660">
    <property type="entry name" value="Helix hairpin bin"/>
    <property type="match status" value="1"/>
</dbReference>
<dbReference type="HAMAP" id="MF_03113">
    <property type="entry name" value="Get1"/>
    <property type="match status" value="1"/>
</dbReference>
<dbReference type="InterPro" id="IPR028945">
    <property type="entry name" value="Get1"/>
</dbReference>
<dbReference type="InterPro" id="IPR027538">
    <property type="entry name" value="Get1_fungi"/>
</dbReference>
<dbReference type="InterPro" id="IPR029012">
    <property type="entry name" value="Helix_hairpin_bin_sf"/>
</dbReference>
<dbReference type="PANTHER" id="PTHR42650:SF1">
    <property type="entry name" value="GUIDED ENTRY OF TAIL-ANCHORED PROTEINS FACTOR 1"/>
    <property type="match status" value="1"/>
</dbReference>
<dbReference type="PANTHER" id="PTHR42650">
    <property type="entry name" value="TAIL-ANCHORED PROTEIN INSERTION RECEPTOR WRB"/>
    <property type="match status" value="1"/>
</dbReference>
<dbReference type="Pfam" id="PF04420">
    <property type="entry name" value="CHD5"/>
    <property type="match status" value="1"/>
</dbReference>
<organism>
    <name type="scientific">Podospora anserina (strain S / ATCC MYA-4624 / DSM 980 / FGSC 10383)</name>
    <name type="common">Pleurage anserina</name>
    <dbReference type="NCBI Taxonomy" id="515849"/>
    <lineage>
        <taxon>Eukaryota</taxon>
        <taxon>Fungi</taxon>
        <taxon>Dikarya</taxon>
        <taxon>Ascomycota</taxon>
        <taxon>Pezizomycotina</taxon>
        <taxon>Sordariomycetes</taxon>
        <taxon>Sordariomycetidae</taxon>
        <taxon>Sordariales</taxon>
        <taxon>Podosporaceae</taxon>
        <taxon>Podospora</taxon>
        <taxon>Podospora anserina</taxon>
    </lineage>
</organism>
<keyword id="KW-0175">Coiled coil</keyword>
<keyword id="KW-0256">Endoplasmic reticulum</keyword>
<keyword id="KW-0472">Membrane</keyword>
<keyword id="KW-1185">Reference proteome</keyword>
<keyword id="KW-0812">Transmembrane</keyword>
<keyword id="KW-1133">Transmembrane helix</keyword>
<keyword id="KW-0813">Transport</keyword>
<evidence type="ECO:0000255" key="1">
    <source>
        <dbReference type="HAMAP-Rule" id="MF_03113"/>
    </source>
</evidence>
<protein>
    <recommendedName>
        <fullName evidence="1">Protein GET1</fullName>
    </recommendedName>
    <alternativeName>
        <fullName evidence="1">Guided entry of tail-anchored proteins 1</fullName>
    </alternativeName>
</protein>